<sequence length="232" mass="25289">MEEVAEEVPVVYLHDVKRQYVQGESILTILNGAKLALWAGQSVALVAPSGAGKSTLLHIAGLLEHPDEGEVYVGGTATSGLSDAERTQIRRTDIGFVYQSHRLLPEFSALENVMLPQMIRGLKRSETTERAKEILAYLGLGDRITHRPAELSGGEQQRVAIARAVANAPRVLLADEPTGNLDVHTADHVFQALMQLVRATQVAMLIATHNMELAGRMDRRVSIQDGLVVELD</sequence>
<evidence type="ECO:0000255" key="1">
    <source>
        <dbReference type="HAMAP-Rule" id="MF_01708"/>
    </source>
</evidence>
<proteinExistence type="inferred from homology"/>
<keyword id="KW-0067">ATP-binding</keyword>
<keyword id="KW-0997">Cell inner membrane</keyword>
<keyword id="KW-1003">Cell membrane</keyword>
<keyword id="KW-0472">Membrane</keyword>
<keyword id="KW-0547">Nucleotide-binding</keyword>
<keyword id="KW-1278">Translocase</keyword>
<keyword id="KW-0813">Transport</keyword>
<feature type="chain" id="PRO_0000272138" description="Lipoprotein-releasing system ATP-binding protein LolD 1">
    <location>
        <begin position="1"/>
        <end position="232"/>
    </location>
</feature>
<feature type="domain" description="ABC transporter" evidence="1">
    <location>
        <begin position="11"/>
        <end position="231"/>
    </location>
</feature>
<feature type="binding site" evidence="1">
    <location>
        <begin position="47"/>
        <end position="54"/>
    </location>
    <ligand>
        <name>ATP</name>
        <dbReference type="ChEBI" id="CHEBI:30616"/>
    </ligand>
</feature>
<comment type="function">
    <text evidence="1">Part of the ABC transporter complex LolCDE involved in the translocation of mature outer membrane-directed lipoproteins, from the inner membrane to the periplasmic chaperone, LolA. Responsible for the formation of the LolA-lipoprotein complex in an ATP-dependent manner.</text>
</comment>
<comment type="subunit">
    <text evidence="1">The complex is composed of two ATP-binding proteins (LolD) and two transmembrane proteins (LolC and LolE).</text>
</comment>
<comment type="subcellular location">
    <subcellularLocation>
        <location evidence="1">Cell inner membrane</location>
        <topology evidence="1">Peripheral membrane protein</topology>
    </subcellularLocation>
</comment>
<comment type="similarity">
    <text evidence="1">Belongs to the ABC transporter superfamily. Lipoprotein translocase (TC 3.A.1.125) family.</text>
</comment>
<dbReference type="EC" id="7.6.2.-" evidence="1"/>
<dbReference type="EMBL" id="CP000301">
    <property type="protein sequence ID" value="ABD87980.1"/>
    <property type="molecule type" value="Genomic_DNA"/>
</dbReference>
<dbReference type="SMR" id="Q215F6"/>
<dbReference type="STRING" id="316056.RPC_2429"/>
<dbReference type="KEGG" id="rpc:RPC_2429"/>
<dbReference type="eggNOG" id="COG1136">
    <property type="taxonomic scope" value="Bacteria"/>
</dbReference>
<dbReference type="HOGENOM" id="CLU_000604_1_22_5"/>
<dbReference type="OrthoDB" id="9786950at2"/>
<dbReference type="GO" id="GO:0005886">
    <property type="term" value="C:plasma membrane"/>
    <property type="evidence" value="ECO:0007669"/>
    <property type="project" value="UniProtKB-SubCell"/>
</dbReference>
<dbReference type="GO" id="GO:0005524">
    <property type="term" value="F:ATP binding"/>
    <property type="evidence" value="ECO:0007669"/>
    <property type="project" value="UniProtKB-KW"/>
</dbReference>
<dbReference type="GO" id="GO:0016887">
    <property type="term" value="F:ATP hydrolysis activity"/>
    <property type="evidence" value="ECO:0007669"/>
    <property type="project" value="InterPro"/>
</dbReference>
<dbReference type="GO" id="GO:0022857">
    <property type="term" value="F:transmembrane transporter activity"/>
    <property type="evidence" value="ECO:0007669"/>
    <property type="project" value="TreeGrafter"/>
</dbReference>
<dbReference type="GO" id="GO:0044874">
    <property type="term" value="P:lipoprotein localization to outer membrane"/>
    <property type="evidence" value="ECO:0007669"/>
    <property type="project" value="TreeGrafter"/>
</dbReference>
<dbReference type="GO" id="GO:0089705">
    <property type="term" value="P:protein localization to outer membrane"/>
    <property type="evidence" value="ECO:0007669"/>
    <property type="project" value="TreeGrafter"/>
</dbReference>
<dbReference type="CDD" id="cd03255">
    <property type="entry name" value="ABC_MJ0796_LolCDE_FtsE"/>
    <property type="match status" value="1"/>
</dbReference>
<dbReference type="FunFam" id="3.40.50.300:FF:000032">
    <property type="entry name" value="Export ABC transporter ATP-binding protein"/>
    <property type="match status" value="1"/>
</dbReference>
<dbReference type="Gene3D" id="3.40.50.300">
    <property type="entry name" value="P-loop containing nucleotide triphosphate hydrolases"/>
    <property type="match status" value="1"/>
</dbReference>
<dbReference type="InterPro" id="IPR003593">
    <property type="entry name" value="AAA+_ATPase"/>
</dbReference>
<dbReference type="InterPro" id="IPR003439">
    <property type="entry name" value="ABC_transporter-like_ATP-bd"/>
</dbReference>
<dbReference type="InterPro" id="IPR017871">
    <property type="entry name" value="ABC_transporter-like_CS"/>
</dbReference>
<dbReference type="InterPro" id="IPR015854">
    <property type="entry name" value="ABC_transpr_LolD-like"/>
</dbReference>
<dbReference type="InterPro" id="IPR017911">
    <property type="entry name" value="MacB-like_ATP-bd"/>
</dbReference>
<dbReference type="InterPro" id="IPR027417">
    <property type="entry name" value="P-loop_NTPase"/>
</dbReference>
<dbReference type="PANTHER" id="PTHR24220">
    <property type="entry name" value="IMPORT ATP-BINDING PROTEIN"/>
    <property type="match status" value="1"/>
</dbReference>
<dbReference type="PANTHER" id="PTHR24220:SF689">
    <property type="entry name" value="LIPOPROTEIN-RELEASING SYSTEM ATP-BINDING PROTEIN LOLD"/>
    <property type="match status" value="1"/>
</dbReference>
<dbReference type="Pfam" id="PF00005">
    <property type="entry name" value="ABC_tran"/>
    <property type="match status" value="1"/>
</dbReference>
<dbReference type="SMART" id="SM00382">
    <property type="entry name" value="AAA"/>
    <property type="match status" value="1"/>
</dbReference>
<dbReference type="SUPFAM" id="SSF52540">
    <property type="entry name" value="P-loop containing nucleoside triphosphate hydrolases"/>
    <property type="match status" value="1"/>
</dbReference>
<dbReference type="PROSITE" id="PS00211">
    <property type="entry name" value="ABC_TRANSPORTER_1"/>
    <property type="match status" value="1"/>
</dbReference>
<dbReference type="PROSITE" id="PS50893">
    <property type="entry name" value="ABC_TRANSPORTER_2"/>
    <property type="match status" value="1"/>
</dbReference>
<dbReference type="PROSITE" id="PS51244">
    <property type="entry name" value="LOLD"/>
    <property type="match status" value="1"/>
</dbReference>
<protein>
    <recommendedName>
        <fullName evidence="1">Lipoprotein-releasing system ATP-binding protein LolD 1</fullName>
        <ecNumber evidence="1">7.6.2.-</ecNumber>
    </recommendedName>
</protein>
<reference key="1">
    <citation type="submission" date="2006-03" db="EMBL/GenBank/DDBJ databases">
        <title>Complete sequence of Rhodopseudomonas palustris BisB18.</title>
        <authorList>
            <consortium name="US DOE Joint Genome Institute"/>
            <person name="Copeland A."/>
            <person name="Lucas S."/>
            <person name="Lapidus A."/>
            <person name="Barry K."/>
            <person name="Detter J.C."/>
            <person name="Glavina del Rio T."/>
            <person name="Hammon N."/>
            <person name="Israni S."/>
            <person name="Dalin E."/>
            <person name="Tice H."/>
            <person name="Pitluck S."/>
            <person name="Chain P."/>
            <person name="Malfatti S."/>
            <person name="Shin M."/>
            <person name="Vergez L."/>
            <person name="Schmutz J."/>
            <person name="Larimer F."/>
            <person name="Land M."/>
            <person name="Hauser L."/>
            <person name="Pelletier D.A."/>
            <person name="Kyrpides N."/>
            <person name="Anderson I."/>
            <person name="Oda Y."/>
            <person name="Harwood C.S."/>
            <person name="Richardson P."/>
        </authorList>
    </citation>
    <scope>NUCLEOTIDE SEQUENCE [LARGE SCALE GENOMIC DNA]</scope>
    <source>
        <strain>BisB18</strain>
    </source>
</reference>
<organism>
    <name type="scientific">Rhodopseudomonas palustris (strain BisB18)</name>
    <dbReference type="NCBI Taxonomy" id="316056"/>
    <lineage>
        <taxon>Bacteria</taxon>
        <taxon>Pseudomonadati</taxon>
        <taxon>Pseudomonadota</taxon>
        <taxon>Alphaproteobacteria</taxon>
        <taxon>Hyphomicrobiales</taxon>
        <taxon>Nitrobacteraceae</taxon>
        <taxon>Rhodopseudomonas</taxon>
    </lineage>
</organism>
<gene>
    <name evidence="1" type="primary">lolD1</name>
    <name type="ordered locus">RPC_2429</name>
</gene>
<accession>Q215F6</accession>
<name>LOLD1_RHOPB</name>